<proteinExistence type="evidence at protein level"/>
<protein>
    <recommendedName>
        <fullName>U6 snRNA-associated Sm-like protein LSm7</fullName>
    </recommendedName>
</protein>
<feature type="initiator methionine" description="Removed" evidence="1">
    <location>
        <position position="1"/>
    </location>
</feature>
<feature type="chain" id="PRO_0000125580" description="U6 snRNA-associated Sm-like protein LSm7">
    <location>
        <begin position="2"/>
        <end position="103"/>
    </location>
</feature>
<feature type="domain" description="Sm" evidence="2">
    <location>
        <begin position="10"/>
        <end position="90"/>
    </location>
</feature>
<feature type="modified residue" description="N-acetylalanine" evidence="1">
    <location>
        <position position="2"/>
    </location>
</feature>
<name>LSM7_MOUSE</name>
<comment type="function">
    <text evidence="1">Plays a role in pre-mRNA splicing as component of the U4/U6-U5 tri-snRNP complex that is involved in spliceosome assembly, and as component of the precatalytic spliceosome (spliceosome B complex). The heptameric LSM2-8 complex binds specifically to the 3'-terminal U-tract of U6 snRNA.</text>
</comment>
<comment type="subunit">
    <text evidence="1">Component of the precatalytic spliceosome (spliceosome B complex). Component of the U4/U6-U5 tri-snRNP complex, a building block of the precatalytic spliceosome (spliceosome B complex). The U4/U6-U5 tri-snRNP complex is composed of the U4, U6 and U5 snRNAs and at least PRPF3, PRPF4, PRPF6, PRPF8, PRPF31, SNRNP200, TXNL4A, SNRNP40, SNRPB, SNRPD1, SNRPD2, SNRPD3, SNRPE, SNRPF, SNRPG, DDX23, CD2BP2, PPIH, SNU13, EFTUD2, SART1 and USP39, plus LSM2, LSM3, LSM4, LSM5, LSM6, LSM7 and LSM8. LSM2, LSM3, LSM4, LSM5, LSM6, LSM7 and LSM8 form a heptameric, ring-shaped subcomplex (the LSM2-8 complex) that is part of the U4/U6-U5 tri-snRNP complex and the precatalytic spliceosome. Interacts with TACC1.</text>
</comment>
<comment type="subcellular location">
    <subcellularLocation>
        <location evidence="1">Nucleus</location>
    </subcellularLocation>
</comment>
<comment type="similarity">
    <text evidence="3">Belongs to the snRNP Sm proteins family.</text>
</comment>
<sequence length="103" mass="11636">MADKEKKKKESILDLSKYIDKTIRVKFQGGREASGILKGFDPLLNLVLDGTMEYMRDPDDQYKLTEDTRQLGLVVCRGTSVVLICPQDGMEAIPNPFVQQQDT</sequence>
<organism>
    <name type="scientific">Mus musculus</name>
    <name type="common">Mouse</name>
    <dbReference type="NCBI Taxonomy" id="10090"/>
    <lineage>
        <taxon>Eukaryota</taxon>
        <taxon>Metazoa</taxon>
        <taxon>Chordata</taxon>
        <taxon>Craniata</taxon>
        <taxon>Vertebrata</taxon>
        <taxon>Euteleostomi</taxon>
        <taxon>Mammalia</taxon>
        <taxon>Eutheria</taxon>
        <taxon>Euarchontoglires</taxon>
        <taxon>Glires</taxon>
        <taxon>Rodentia</taxon>
        <taxon>Myomorpha</taxon>
        <taxon>Muroidea</taxon>
        <taxon>Muridae</taxon>
        <taxon>Murinae</taxon>
        <taxon>Mus</taxon>
        <taxon>Mus</taxon>
    </lineage>
</organism>
<accession>Q9CQQ8</accession>
<dbReference type="EMBL" id="AK013355">
    <property type="protein sequence ID" value="BAB28806.1"/>
    <property type="molecule type" value="mRNA"/>
</dbReference>
<dbReference type="EMBL" id="BC027511">
    <property type="protein sequence ID" value="AAH27511.1"/>
    <property type="molecule type" value="mRNA"/>
</dbReference>
<dbReference type="EMBL" id="BC081444">
    <property type="protein sequence ID" value="AAH81444.1"/>
    <property type="molecule type" value="mRNA"/>
</dbReference>
<dbReference type="EMBL" id="AK003062">
    <property type="protein sequence ID" value="BAB22540.1"/>
    <property type="molecule type" value="mRNA"/>
</dbReference>
<dbReference type="EMBL" id="AK007462">
    <property type="protein sequence ID" value="BAB25051.1"/>
    <property type="molecule type" value="mRNA"/>
</dbReference>
<dbReference type="EMBL" id="AK012446">
    <property type="protein sequence ID" value="BAB28245.1"/>
    <property type="molecule type" value="mRNA"/>
</dbReference>
<dbReference type="CCDS" id="CCDS35987.1"/>
<dbReference type="RefSeq" id="NP_079625.1">
    <property type="nucleotide sequence ID" value="NM_025349.2"/>
</dbReference>
<dbReference type="SMR" id="Q9CQQ8"/>
<dbReference type="BioGRID" id="211210">
    <property type="interactions" value="12"/>
</dbReference>
<dbReference type="FunCoup" id="Q9CQQ8">
    <property type="interactions" value="2341"/>
</dbReference>
<dbReference type="IntAct" id="Q9CQQ8">
    <property type="interactions" value="2"/>
</dbReference>
<dbReference type="MINT" id="Q9CQQ8"/>
<dbReference type="STRING" id="10090.ENSMUSP00000044993"/>
<dbReference type="iPTMnet" id="Q9CQQ8"/>
<dbReference type="PhosphoSitePlus" id="Q9CQQ8"/>
<dbReference type="REPRODUCTION-2DPAGE" id="Q9CQQ8"/>
<dbReference type="jPOST" id="Q9CQQ8"/>
<dbReference type="PaxDb" id="10090-ENSMUSP00000044993"/>
<dbReference type="PeptideAtlas" id="Q9CQQ8"/>
<dbReference type="ProteomicsDB" id="292048"/>
<dbReference type="Pumba" id="Q9CQQ8"/>
<dbReference type="Antibodypedia" id="42295">
    <property type="antibodies" value="142 antibodies from 22 providers"/>
</dbReference>
<dbReference type="DNASU" id="66094"/>
<dbReference type="Ensembl" id="ENSMUST00000035775.9">
    <property type="protein sequence ID" value="ENSMUSP00000044993.9"/>
    <property type="gene ID" value="ENSMUSG00000035215.10"/>
</dbReference>
<dbReference type="GeneID" id="66094"/>
<dbReference type="KEGG" id="mmu:66094"/>
<dbReference type="UCSC" id="uc007gez.1">
    <property type="organism name" value="mouse"/>
</dbReference>
<dbReference type="AGR" id="MGI:1913344"/>
<dbReference type="CTD" id="51690"/>
<dbReference type="MGI" id="MGI:1913344">
    <property type="gene designation" value="Lsm7"/>
</dbReference>
<dbReference type="VEuPathDB" id="HostDB:ENSMUSG00000035215"/>
<dbReference type="eggNOG" id="KOG1781">
    <property type="taxonomic scope" value="Eukaryota"/>
</dbReference>
<dbReference type="GeneTree" id="ENSGT00510000047872"/>
<dbReference type="HOGENOM" id="CLU_076902_3_1_1"/>
<dbReference type="InParanoid" id="Q9CQQ8"/>
<dbReference type="OMA" id="PFVQQEE"/>
<dbReference type="OrthoDB" id="2146at2759"/>
<dbReference type="PhylomeDB" id="Q9CQQ8"/>
<dbReference type="TreeFam" id="TF314385"/>
<dbReference type="Reactome" id="R-MMU-430039">
    <property type="pathway name" value="mRNA decay by 5' to 3' exoribonuclease"/>
</dbReference>
<dbReference type="Reactome" id="R-MMU-72163">
    <property type="pathway name" value="mRNA Splicing - Major Pathway"/>
</dbReference>
<dbReference type="BioGRID-ORCS" id="66094">
    <property type="hits" value="29 hits in 75 CRISPR screens"/>
</dbReference>
<dbReference type="ChiTaRS" id="Lsm7">
    <property type="organism name" value="mouse"/>
</dbReference>
<dbReference type="PRO" id="PR:Q9CQQ8"/>
<dbReference type="Proteomes" id="UP000000589">
    <property type="component" value="Chromosome 10"/>
</dbReference>
<dbReference type="RNAct" id="Q9CQQ8">
    <property type="molecule type" value="protein"/>
</dbReference>
<dbReference type="Bgee" id="ENSMUSG00000035215">
    <property type="expression patterns" value="Expressed in epiblast cell in embryo and 263 other cell types or tissues"/>
</dbReference>
<dbReference type="ExpressionAtlas" id="Q9CQQ8">
    <property type="expression patterns" value="baseline and differential"/>
</dbReference>
<dbReference type="GO" id="GO:0005737">
    <property type="term" value="C:cytoplasm"/>
    <property type="evidence" value="ECO:0000266"/>
    <property type="project" value="MGI"/>
</dbReference>
<dbReference type="GO" id="GO:0120115">
    <property type="term" value="C:Lsm2-8 complex"/>
    <property type="evidence" value="ECO:0000250"/>
    <property type="project" value="UniProtKB"/>
</dbReference>
<dbReference type="GO" id="GO:0005634">
    <property type="term" value="C:nucleus"/>
    <property type="evidence" value="ECO:0000250"/>
    <property type="project" value="UniProtKB"/>
</dbReference>
<dbReference type="GO" id="GO:0071005">
    <property type="term" value="C:U2-type precatalytic spliceosome"/>
    <property type="evidence" value="ECO:0000250"/>
    <property type="project" value="UniProtKB"/>
</dbReference>
<dbReference type="GO" id="GO:0046540">
    <property type="term" value="C:U4/U6 x U5 tri-snRNP complex"/>
    <property type="evidence" value="ECO:0000250"/>
    <property type="project" value="UniProtKB"/>
</dbReference>
<dbReference type="GO" id="GO:0046982">
    <property type="term" value="F:protein heterodimerization activity"/>
    <property type="evidence" value="ECO:0000266"/>
    <property type="project" value="MGI"/>
</dbReference>
<dbReference type="GO" id="GO:0003723">
    <property type="term" value="F:RNA binding"/>
    <property type="evidence" value="ECO:0007669"/>
    <property type="project" value="UniProtKB-KW"/>
</dbReference>
<dbReference type="GO" id="GO:0006402">
    <property type="term" value="P:mRNA catabolic process"/>
    <property type="evidence" value="ECO:0000266"/>
    <property type="project" value="MGI"/>
</dbReference>
<dbReference type="GO" id="GO:0000398">
    <property type="term" value="P:mRNA splicing, via spliceosome"/>
    <property type="evidence" value="ECO:0000250"/>
    <property type="project" value="UniProtKB"/>
</dbReference>
<dbReference type="GO" id="GO:0000956">
    <property type="term" value="P:nuclear-transcribed mRNA catabolic process"/>
    <property type="evidence" value="ECO:0007669"/>
    <property type="project" value="InterPro"/>
</dbReference>
<dbReference type="CDD" id="cd01729">
    <property type="entry name" value="LSm7"/>
    <property type="match status" value="1"/>
</dbReference>
<dbReference type="FunFam" id="2.30.30.100:FF:000025">
    <property type="entry name" value="U6 snRNA-associated Sm-like protein LSm7"/>
    <property type="match status" value="1"/>
</dbReference>
<dbReference type="Gene3D" id="2.30.30.100">
    <property type="match status" value="1"/>
</dbReference>
<dbReference type="InterPro" id="IPR017132">
    <property type="entry name" value="Lsm7"/>
</dbReference>
<dbReference type="InterPro" id="IPR044641">
    <property type="entry name" value="Lsm7/SmG-like"/>
</dbReference>
<dbReference type="InterPro" id="IPR010920">
    <property type="entry name" value="LSM_dom_sf"/>
</dbReference>
<dbReference type="InterPro" id="IPR047575">
    <property type="entry name" value="Sm"/>
</dbReference>
<dbReference type="InterPro" id="IPR001163">
    <property type="entry name" value="Sm_dom_euk/arc"/>
</dbReference>
<dbReference type="PANTHER" id="PTHR10553">
    <property type="entry name" value="SMALL NUCLEAR RIBONUCLEOPROTEIN"/>
    <property type="match status" value="1"/>
</dbReference>
<dbReference type="PANTHER" id="PTHR10553:SF5">
    <property type="entry name" value="U6 SNRNA-ASSOCIATED SM-LIKE PROTEIN LSM7"/>
    <property type="match status" value="1"/>
</dbReference>
<dbReference type="Pfam" id="PF01423">
    <property type="entry name" value="LSM"/>
    <property type="match status" value="1"/>
</dbReference>
<dbReference type="PIRSF" id="PIRSF037188">
    <property type="entry name" value="U6_snRNA_Lsm7"/>
    <property type="match status" value="1"/>
</dbReference>
<dbReference type="SMART" id="SM00651">
    <property type="entry name" value="Sm"/>
    <property type="match status" value="1"/>
</dbReference>
<dbReference type="SUPFAM" id="SSF50182">
    <property type="entry name" value="Sm-like ribonucleoproteins"/>
    <property type="match status" value="1"/>
</dbReference>
<dbReference type="PROSITE" id="PS52002">
    <property type="entry name" value="SM"/>
    <property type="match status" value="1"/>
</dbReference>
<reference key="1">
    <citation type="journal article" date="2005" name="Science">
        <title>The transcriptional landscape of the mammalian genome.</title>
        <authorList>
            <person name="Carninci P."/>
            <person name="Kasukawa T."/>
            <person name="Katayama S."/>
            <person name="Gough J."/>
            <person name="Frith M.C."/>
            <person name="Maeda N."/>
            <person name="Oyama R."/>
            <person name="Ravasi T."/>
            <person name="Lenhard B."/>
            <person name="Wells C."/>
            <person name="Kodzius R."/>
            <person name="Shimokawa K."/>
            <person name="Bajic V.B."/>
            <person name="Brenner S.E."/>
            <person name="Batalov S."/>
            <person name="Forrest A.R."/>
            <person name="Zavolan M."/>
            <person name="Davis M.J."/>
            <person name="Wilming L.G."/>
            <person name="Aidinis V."/>
            <person name="Allen J.E."/>
            <person name="Ambesi-Impiombato A."/>
            <person name="Apweiler R."/>
            <person name="Aturaliya R.N."/>
            <person name="Bailey T.L."/>
            <person name="Bansal M."/>
            <person name="Baxter L."/>
            <person name="Beisel K.W."/>
            <person name="Bersano T."/>
            <person name="Bono H."/>
            <person name="Chalk A.M."/>
            <person name="Chiu K.P."/>
            <person name="Choudhary V."/>
            <person name="Christoffels A."/>
            <person name="Clutterbuck D.R."/>
            <person name="Crowe M.L."/>
            <person name="Dalla E."/>
            <person name="Dalrymple B.P."/>
            <person name="de Bono B."/>
            <person name="Della Gatta G."/>
            <person name="di Bernardo D."/>
            <person name="Down T."/>
            <person name="Engstrom P."/>
            <person name="Fagiolini M."/>
            <person name="Faulkner G."/>
            <person name="Fletcher C.F."/>
            <person name="Fukushima T."/>
            <person name="Furuno M."/>
            <person name="Futaki S."/>
            <person name="Gariboldi M."/>
            <person name="Georgii-Hemming P."/>
            <person name="Gingeras T.R."/>
            <person name="Gojobori T."/>
            <person name="Green R.E."/>
            <person name="Gustincich S."/>
            <person name="Harbers M."/>
            <person name="Hayashi Y."/>
            <person name="Hensch T.K."/>
            <person name="Hirokawa N."/>
            <person name="Hill D."/>
            <person name="Huminiecki L."/>
            <person name="Iacono M."/>
            <person name="Ikeo K."/>
            <person name="Iwama A."/>
            <person name="Ishikawa T."/>
            <person name="Jakt M."/>
            <person name="Kanapin A."/>
            <person name="Katoh M."/>
            <person name="Kawasawa Y."/>
            <person name="Kelso J."/>
            <person name="Kitamura H."/>
            <person name="Kitano H."/>
            <person name="Kollias G."/>
            <person name="Krishnan S.P."/>
            <person name="Kruger A."/>
            <person name="Kummerfeld S.K."/>
            <person name="Kurochkin I.V."/>
            <person name="Lareau L.F."/>
            <person name="Lazarevic D."/>
            <person name="Lipovich L."/>
            <person name="Liu J."/>
            <person name="Liuni S."/>
            <person name="McWilliam S."/>
            <person name="Madan Babu M."/>
            <person name="Madera M."/>
            <person name="Marchionni L."/>
            <person name="Matsuda H."/>
            <person name="Matsuzawa S."/>
            <person name="Miki H."/>
            <person name="Mignone F."/>
            <person name="Miyake S."/>
            <person name="Morris K."/>
            <person name="Mottagui-Tabar S."/>
            <person name="Mulder N."/>
            <person name="Nakano N."/>
            <person name="Nakauchi H."/>
            <person name="Ng P."/>
            <person name="Nilsson R."/>
            <person name="Nishiguchi S."/>
            <person name="Nishikawa S."/>
            <person name="Nori F."/>
            <person name="Ohara O."/>
            <person name="Okazaki Y."/>
            <person name="Orlando V."/>
            <person name="Pang K.C."/>
            <person name="Pavan W.J."/>
            <person name="Pavesi G."/>
            <person name="Pesole G."/>
            <person name="Petrovsky N."/>
            <person name="Piazza S."/>
            <person name="Reed J."/>
            <person name="Reid J.F."/>
            <person name="Ring B.Z."/>
            <person name="Ringwald M."/>
            <person name="Rost B."/>
            <person name="Ruan Y."/>
            <person name="Salzberg S.L."/>
            <person name="Sandelin A."/>
            <person name="Schneider C."/>
            <person name="Schoenbach C."/>
            <person name="Sekiguchi K."/>
            <person name="Semple C.A."/>
            <person name="Seno S."/>
            <person name="Sessa L."/>
            <person name="Sheng Y."/>
            <person name="Shibata Y."/>
            <person name="Shimada H."/>
            <person name="Shimada K."/>
            <person name="Silva D."/>
            <person name="Sinclair B."/>
            <person name="Sperling S."/>
            <person name="Stupka E."/>
            <person name="Sugiura K."/>
            <person name="Sultana R."/>
            <person name="Takenaka Y."/>
            <person name="Taki K."/>
            <person name="Tammoja K."/>
            <person name="Tan S.L."/>
            <person name="Tang S."/>
            <person name="Taylor M.S."/>
            <person name="Tegner J."/>
            <person name="Teichmann S.A."/>
            <person name="Ueda H.R."/>
            <person name="van Nimwegen E."/>
            <person name="Verardo R."/>
            <person name="Wei C.L."/>
            <person name="Yagi K."/>
            <person name="Yamanishi H."/>
            <person name="Zabarovsky E."/>
            <person name="Zhu S."/>
            <person name="Zimmer A."/>
            <person name="Hide W."/>
            <person name="Bult C."/>
            <person name="Grimmond S.M."/>
            <person name="Teasdale R.D."/>
            <person name="Liu E.T."/>
            <person name="Brusic V."/>
            <person name="Quackenbush J."/>
            <person name="Wahlestedt C."/>
            <person name="Mattick J.S."/>
            <person name="Hume D.A."/>
            <person name="Kai C."/>
            <person name="Sasaki D."/>
            <person name="Tomaru Y."/>
            <person name="Fukuda S."/>
            <person name="Kanamori-Katayama M."/>
            <person name="Suzuki M."/>
            <person name="Aoki J."/>
            <person name="Arakawa T."/>
            <person name="Iida J."/>
            <person name="Imamura K."/>
            <person name="Itoh M."/>
            <person name="Kato T."/>
            <person name="Kawaji H."/>
            <person name="Kawagashira N."/>
            <person name="Kawashima T."/>
            <person name="Kojima M."/>
            <person name="Kondo S."/>
            <person name="Konno H."/>
            <person name="Nakano K."/>
            <person name="Ninomiya N."/>
            <person name="Nishio T."/>
            <person name="Okada M."/>
            <person name="Plessy C."/>
            <person name="Shibata K."/>
            <person name="Shiraki T."/>
            <person name="Suzuki S."/>
            <person name="Tagami M."/>
            <person name="Waki K."/>
            <person name="Watahiki A."/>
            <person name="Okamura-Oho Y."/>
            <person name="Suzuki H."/>
            <person name="Kawai J."/>
            <person name="Hayashizaki Y."/>
        </authorList>
    </citation>
    <scope>NUCLEOTIDE SEQUENCE [LARGE SCALE MRNA]</scope>
    <source>
        <strain>C57BL/6J</strain>
        <tissue>Pancreas</tissue>
        <tissue>Spleen</tissue>
    </source>
</reference>
<reference key="2">
    <citation type="journal article" date="2004" name="Genome Res.">
        <title>The status, quality, and expansion of the NIH full-length cDNA project: the Mammalian Gene Collection (MGC).</title>
        <authorList>
            <consortium name="The MGC Project Team"/>
        </authorList>
    </citation>
    <scope>NUCLEOTIDE SEQUENCE [LARGE SCALE MRNA]</scope>
    <source>
        <strain>C57BL/6J</strain>
        <tissue>Brain</tissue>
        <tissue>Mammary gland</tissue>
    </source>
</reference>
<reference key="3">
    <citation type="journal article" date="2010" name="Cell">
        <title>A tissue-specific atlas of mouse protein phosphorylation and expression.</title>
        <authorList>
            <person name="Huttlin E.L."/>
            <person name="Jedrychowski M.P."/>
            <person name="Elias J.E."/>
            <person name="Goswami T."/>
            <person name="Rad R."/>
            <person name="Beausoleil S.A."/>
            <person name="Villen J."/>
            <person name="Haas W."/>
            <person name="Sowa M.E."/>
            <person name="Gygi S.P."/>
        </authorList>
    </citation>
    <scope>IDENTIFICATION BY MASS SPECTROMETRY [LARGE SCALE ANALYSIS]</scope>
    <source>
        <tissue>Brain</tissue>
        <tissue>Testis</tissue>
    </source>
</reference>
<keyword id="KW-0007">Acetylation</keyword>
<keyword id="KW-0507">mRNA processing</keyword>
<keyword id="KW-0508">mRNA splicing</keyword>
<keyword id="KW-0539">Nucleus</keyword>
<keyword id="KW-1185">Reference proteome</keyword>
<keyword id="KW-0687">Ribonucleoprotein</keyword>
<keyword id="KW-0694">RNA-binding</keyword>
<keyword id="KW-0747">Spliceosome</keyword>
<evidence type="ECO:0000250" key="1">
    <source>
        <dbReference type="UniProtKB" id="Q9UK45"/>
    </source>
</evidence>
<evidence type="ECO:0000255" key="2">
    <source>
        <dbReference type="PROSITE-ProRule" id="PRU01346"/>
    </source>
</evidence>
<evidence type="ECO:0000305" key="3"/>
<gene>
    <name type="primary">Lsm7</name>
</gene>